<dbReference type="EMBL" id="AE014075">
    <property type="protein sequence ID" value="AAN79704.1"/>
    <property type="status" value="ALT_INIT"/>
    <property type="molecule type" value="Genomic_DNA"/>
</dbReference>
<dbReference type="SMR" id="P62089"/>
<dbReference type="STRING" id="199310.c1247"/>
<dbReference type="KEGG" id="ecc:c1247"/>
<dbReference type="eggNOG" id="COG1846">
    <property type="taxonomic scope" value="Bacteria"/>
</dbReference>
<dbReference type="HOGENOM" id="CLU_083287_17_1_6"/>
<dbReference type="Proteomes" id="UP000001410">
    <property type="component" value="Chromosome"/>
</dbReference>
<dbReference type="GO" id="GO:0005737">
    <property type="term" value="C:cytoplasm"/>
    <property type="evidence" value="ECO:0007669"/>
    <property type="project" value="UniProtKB-SubCell"/>
</dbReference>
<dbReference type="GO" id="GO:0003677">
    <property type="term" value="F:DNA binding"/>
    <property type="evidence" value="ECO:0007669"/>
    <property type="project" value="UniProtKB-KW"/>
</dbReference>
<dbReference type="GO" id="GO:0003700">
    <property type="term" value="F:DNA-binding transcription factor activity"/>
    <property type="evidence" value="ECO:0007669"/>
    <property type="project" value="InterPro"/>
</dbReference>
<dbReference type="Gene3D" id="1.10.10.10">
    <property type="entry name" value="Winged helix-like DNA-binding domain superfamily/Winged helix DNA-binding domain"/>
    <property type="match status" value="1"/>
</dbReference>
<dbReference type="InterPro" id="IPR000835">
    <property type="entry name" value="HTH_MarR-typ"/>
</dbReference>
<dbReference type="InterPro" id="IPR023187">
    <property type="entry name" value="Tscrpt_reg_MarR-type_CS"/>
</dbReference>
<dbReference type="InterPro" id="IPR036388">
    <property type="entry name" value="WH-like_DNA-bd_sf"/>
</dbReference>
<dbReference type="InterPro" id="IPR036390">
    <property type="entry name" value="WH_DNA-bd_sf"/>
</dbReference>
<dbReference type="PANTHER" id="PTHR42756">
    <property type="entry name" value="TRANSCRIPTIONAL REGULATOR, MARR"/>
    <property type="match status" value="1"/>
</dbReference>
<dbReference type="PANTHER" id="PTHR42756:SF1">
    <property type="entry name" value="TRANSCRIPTIONAL REPRESSOR OF EMRAB OPERON"/>
    <property type="match status" value="1"/>
</dbReference>
<dbReference type="Pfam" id="PF01047">
    <property type="entry name" value="MarR"/>
    <property type="match status" value="1"/>
</dbReference>
<dbReference type="PRINTS" id="PR00598">
    <property type="entry name" value="HTHMARR"/>
</dbReference>
<dbReference type="SMART" id="SM00347">
    <property type="entry name" value="HTH_MARR"/>
    <property type="match status" value="1"/>
</dbReference>
<dbReference type="SUPFAM" id="SSF46785">
    <property type="entry name" value="Winged helix' DNA-binding domain"/>
    <property type="match status" value="1"/>
</dbReference>
<dbReference type="PROSITE" id="PS01117">
    <property type="entry name" value="HTH_MARR_1"/>
    <property type="match status" value="1"/>
</dbReference>
<dbReference type="PROSITE" id="PS50995">
    <property type="entry name" value="HTH_MARR_2"/>
    <property type="match status" value="1"/>
</dbReference>
<proteinExistence type="predicted"/>
<sequence length="166" mass="19466">MNNTDTLEKIIRHQKNKDPAYPFQEHLLMQLCIRANKRMQDNISEFLGAYGINHSVYMVLTTLFTAESHCLSPSEISQKLQFTRTNITRITDFLEKTGYVKRTDSREDRRAKKISLTSEGMFFIQRLTLAQSMYLKEIWGYLTHDEQELFEVINKKLLAHLDDVSS</sequence>
<organism>
    <name type="scientific">Escherichia coli O6:H1 (strain CFT073 / ATCC 700928 / UPEC)</name>
    <dbReference type="NCBI Taxonomy" id="199310"/>
    <lineage>
        <taxon>Bacteria</taxon>
        <taxon>Pseudomonadati</taxon>
        <taxon>Pseudomonadota</taxon>
        <taxon>Gammaproteobacteria</taxon>
        <taxon>Enterobacterales</taxon>
        <taxon>Enterobacteriaceae</taxon>
        <taxon>Escherichia</taxon>
    </lineage>
</organism>
<gene>
    <name type="primary">prsX</name>
    <name type="ordered locus">c1247</name>
</gene>
<feature type="chain" id="PRO_0000054381" description="HTH-type transcriptional regulator PrsX">
    <location>
        <begin position="1"/>
        <end position="166"/>
    </location>
</feature>
<feature type="domain" description="HTH marR-type" evidence="1">
    <location>
        <begin position="25"/>
        <end position="159"/>
    </location>
</feature>
<name>PRSX_ECOL6</name>
<protein>
    <recommendedName>
        <fullName>HTH-type transcriptional regulator PrsX</fullName>
    </recommendedName>
</protein>
<keyword id="KW-0963">Cytoplasm</keyword>
<keyword id="KW-0238">DNA-binding</keyword>
<keyword id="KW-1185">Reference proteome</keyword>
<keyword id="KW-0804">Transcription</keyword>
<keyword id="KW-0805">Transcription regulation</keyword>
<accession>P62089</accession>
<accession>P42192</accession>
<reference key="1">
    <citation type="journal article" date="2002" name="Proc. Natl. Acad. Sci. U.S.A.">
        <title>Extensive mosaic structure revealed by the complete genome sequence of uropathogenic Escherichia coli.</title>
        <authorList>
            <person name="Welch R.A."/>
            <person name="Burland V."/>
            <person name="Plunkett G. III"/>
            <person name="Redford P."/>
            <person name="Roesch P."/>
            <person name="Rasko D."/>
            <person name="Buckles E.L."/>
            <person name="Liou S.-R."/>
            <person name="Boutin A."/>
            <person name="Hackett J."/>
            <person name="Stroud D."/>
            <person name="Mayhew G.F."/>
            <person name="Rose D.J."/>
            <person name="Zhou S."/>
            <person name="Schwartz D.C."/>
            <person name="Perna N.T."/>
            <person name="Mobley H.L.T."/>
            <person name="Donnenberg M.S."/>
            <person name="Blattner F.R."/>
        </authorList>
    </citation>
    <scope>NUCLEOTIDE SEQUENCE [LARGE SCALE GENOMIC DNA]</scope>
    <source>
        <strain>CFT073 / ATCC 700928 / UPEC</strain>
    </source>
</reference>
<evidence type="ECO:0000255" key="1">
    <source>
        <dbReference type="PROSITE-ProRule" id="PRU00345"/>
    </source>
</evidence>
<evidence type="ECO:0000305" key="2"/>
<comment type="subcellular location">
    <subcellularLocation>
        <location evidence="2">Cytoplasm</location>
    </subcellularLocation>
</comment>
<comment type="sequence caution" evidence="2">
    <conflict type="erroneous initiation">
        <sequence resource="EMBL-CDS" id="AAN79704"/>
    </conflict>
</comment>